<sequence>MAKLSRNQARKAKNLKIRTKITGTAERPRLSVFRSHMNFSAQLIDDSKSITIVGITTAKKGSKEYHGNIKSAHELGLKFAKMIKEKNVSKIVFDRSGYLYHGRVKAFAEALRSEGIEF</sequence>
<proteinExistence type="inferred from homology"/>
<comment type="function">
    <text evidence="1">This is one of the proteins that bind and probably mediate the attachment of the 5S RNA into the large ribosomal subunit, where it forms part of the central protuberance.</text>
</comment>
<comment type="subunit">
    <text evidence="1">Part of the 50S ribosomal subunit; part of the 5S rRNA/L5/L18/L25 subcomplex. Contacts the 5S and 23S rRNAs.</text>
</comment>
<comment type="similarity">
    <text evidence="1">Belongs to the universal ribosomal protein uL18 family.</text>
</comment>
<name>RL18_MYCPU</name>
<feature type="chain" id="PRO_0000131304" description="Large ribosomal subunit protein uL18">
    <location>
        <begin position="1"/>
        <end position="118"/>
    </location>
</feature>
<organism>
    <name type="scientific">Mycoplasmopsis pulmonis (strain UAB CTIP)</name>
    <name type="common">Mycoplasma pulmonis</name>
    <dbReference type="NCBI Taxonomy" id="272635"/>
    <lineage>
        <taxon>Bacteria</taxon>
        <taxon>Bacillati</taxon>
        <taxon>Mycoplasmatota</taxon>
        <taxon>Mycoplasmoidales</taxon>
        <taxon>Metamycoplasmataceae</taxon>
        <taxon>Mycoplasmopsis</taxon>
    </lineage>
</organism>
<dbReference type="EMBL" id="AL445565">
    <property type="protein sequence ID" value="CAC13744.1"/>
    <property type="molecule type" value="Genomic_DNA"/>
</dbReference>
<dbReference type="PIR" id="C90583">
    <property type="entry name" value="C90583"/>
</dbReference>
<dbReference type="RefSeq" id="WP_010925372.1">
    <property type="nucleotide sequence ID" value="NC_002771.1"/>
</dbReference>
<dbReference type="SMR" id="Q98PZ8"/>
<dbReference type="STRING" id="272635.gene:17577178"/>
<dbReference type="KEGG" id="mpu:MYPU_5710"/>
<dbReference type="eggNOG" id="COG0256">
    <property type="taxonomic scope" value="Bacteria"/>
</dbReference>
<dbReference type="HOGENOM" id="CLU_098841_0_1_14"/>
<dbReference type="BioCyc" id="MPUL272635:G1GT6-584-MONOMER"/>
<dbReference type="Proteomes" id="UP000000528">
    <property type="component" value="Chromosome"/>
</dbReference>
<dbReference type="GO" id="GO:0005737">
    <property type="term" value="C:cytoplasm"/>
    <property type="evidence" value="ECO:0007669"/>
    <property type="project" value="UniProtKB-ARBA"/>
</dbReference>
<dbReference type="GO" id="GO:1990904">
    <property type="term" value="C:ribonucleoprotein complex"/>
    <property type="evidence" value="ECO:0007669"/>
    <property type="project" value="UniProtKB-KW"/>
</dbReference>
<dbReference type="GO" id="GO:0005840">
    <property type="term" value="C:ribosome"/>
    <property type="evidence" value="ECO:0007669"/>
    <property type="project" value="UniProtKB-KW"/>
</dbReference>
<dbReference type="GO" id="GO:0008097">
    <property type="term" value="F:5S rRNA binding"/>
    <property type="evidence" value="ECO:0007669"/>
    <property type="project" value="TreeGrafter"/>
</dbReference>
<dbReference type="GO" id="GO:0003735">
    <property type="term" value="F:structural constituent of ribosome"/>
    <property type="evidence" value="ECO:0007669"/>
    <property type="project" value="InterPro"/>
</dbReference>
<dbReference type="GO" id="GO:0006412">
    <property type="term" value="P:translation"/>
    <property type="evidence" value="ECO:0007669"/>
    <property type="project" value="UniProtKB-UniRule"/>
</dbReference>
<dbReference type="CDD" id="cd00432">
    <property type="entry name" value="Ribosomal_L18_L5e"/>
    <property type="match status" value="1"/>
</dbReference>
<dbReference type="Gene3D" id="3.30.420.100">
    <property type="match status" value="1"/>
</dbReference>
<dbReference type="HAMAP" id="MF_01337_B">
    <property type="entry name" value="Ribosomal_uL18_B"/>
    <property type="match status" value="1"/>
</dbReference>
<dbReference type="InterPro" id="IPR004389">
    <property type="entry name" value="Ribosomal_uL18_bac-type"/>
</dbReference>
<dbReference type="InterPro" id="IPR005484">
    <property type="entry name" value="Ribosomal_uL18_bac/euk"/>
</dbReference>
<dbReference type="NCBIfam" id="TIGR00060">
    <property type="entry name" value="L18_bact"/>
    <property type="match status" value="1"/>
</dbReference>
<dbReference type="PANTHER" id="PTHR12899">
    <property type="entry name" value="39S RIBOSOMAL PROTEIN L18, MITOCHONDRIAL"/>
    <property type="match status" value="1"/>
</dbReference>
<dbReference type="PANTHER" id="PTHR12899:SF3">
    <property type="entry name" value="LARGE RIBOSOMAL SUBUNIT PROTEIN UL18M"/>
    <property type="match status" value="1"/>
</dbReference>
<dbReference type="Pfam" id="PF00861">
    <property type="entry name" value="Ribosomal_L18p"/>
    <property type="match status" value="1"/>
</dbReference>
<dbReference type="SUPFAM" id="SSF53137">
    <property type="entry name" value="Translational machinery components"/>
    <property type="match status" value="1"/>
</dbReference>
<reference key="1">
    <citation type="journal article" date="2001" name="Nucleic Acids Res.">
        <title>The complete genome sequence of the murine respiratory pathogen Mycoplasma pulmonis.</title>
        <authorList>
            <person name="Chambaud I."/>
            <person name="Heilig R."/>
            <person name="Ferris S."/>
            <person name="Barbe V."/>
            <person name="Samson D."/>
            <person name="Galisson F."/>
            <person name="Moszer I."/>
            <person name="Dybvig K."/>
            <person name="Wroblewski H."/>
            <person name="Viari A."/>
            <person name="Rocha E.P.C."/>
            <person name="Blanchard A."/>
        </authorList>
    </citation>
    <scope>NUCLEOTIDE SEQUENCE [LARGE SCALE GENOMIC DNA]</scope>
    <source>
        <strain>UAB CTIP</strain>
    </source>
</reference>
<evidence type="ECO:0000255" key="1">
    <source>
        <dbReference type="HAMAP-Rule" id="MF_01337"/>
    </source>
</evidence>
<evidence type="ECO:0000305" key="2"/>
<gene>
    <name evidence="1" type="primary">rplR</name>
    <name type="ordered locus">MYPU_5710</name>
</gene>
<protein>
    <recommendedName>
        <fullName evidence="1">Large ribosomal subunit protein uL18</fullName>
    </recommendedName>
    <alternativeName>
        <fullName evidence="2">50S ribosomal protein L18</fullName>
    </alternativeName>
</protein>
<keyword id="KW-1185">Reference proteome</keyword>
<keyword id="KW-0687">Ribonucleoprotein</keyword>
<keyword id="KW-0689">Ribosomal protein</keyword>
<keyword id="KW-0694">RNA-binding</keyword>
<keyword id="KW-0699">rRNA-binding</keyword>
<accession>Q98PZ8</accession>